<feature type="chain" id="PRO_0000451696" description="Decapping nuclease RAI1">
    <location>
        <begin position="1"/>
        <end position="396"/>
    </location>
</feature>
<feature type="binding site" evidence="6 12">
    <location>
        <begin position="107"/>
        <end position="109"/>
    </location>
    <ligand>
        <name>substrate</name>
    </ligand>
</feature>
<feature type="binding site" evidence="6 12">
    <location>
        <position position="179"/>
    </location>
    <ligand>
        <name>a divalent metal cation</name>
        <dbReference type="ChEBI" id="CHEBI:60240"/>
    </ligand>
</feature>
<feature type="binding site" evidence="6 12">
    <location>
        <position position="228"/>
    </location>
    <ligand>
        <name>substrate</name>
    </ligand>
</feature>
<feature type="binding site" evidence="6 12">
    <location>
        <position position="230"/>
    </location>
    <ligand>
        <name>a divalent metal cation</name>
        <dbReference type="ChEBI" id="CHEBI:60240"/>
    </ligand>
</feature>
<feature type="binding site" evidence="6 12">
    <location>
        <position position="249"/>
    </location>
    <ligand>
        <name>a divalent metal cation</name>
        <dbReference type="ChEBI" id="CHEBI:60240"/>
    </ligand>
</feature>
<feature type="binding site" evidence="6 12">
    <location>
        <position position="250"/>
    </location>
    <ligand>
        <name>a divalent metal cation</name>
        <dbReference type="ChEBI" id="CHEBI:60240"/>
    </ligand>
</feature>
<feature type="binding site" evidence="6 12">
    <location>
        <position position="251"/>
    </location>
    <ligand>
        <name>substrate</name>
    </ligand>
</feature>
<feature type="binding site" evidence="6 12">
    <location>
        <position position="275"/>
    </location>
    <ligand>
        <name>substrate</name>
    </ligand>
</feature>
<feature type="strand" evidence="13">
    <location>
        <begin position="2"/>
        <end position="5"/>
    </location>
</feature>
<feature type="strand" evidence="13">
    <location>
        <begin position="20"/>
        <end position="27"/>
    </location>
</feature>
<feature type="helix" evidence="13">
    <location>
        <begin position="37"/>
        <end position="43"/>
    </location>
</feature>
<feature type="helix" evidence="13">
    <location>
        <begin position="52"/>
        <end position="54"/>
    </location>
</feature>
<feature type="turn" evidence="13">
    <location>
        <begin position="61"/>
        <end position="64"/>
    </location>
</feature>
<feature type="helix" evidence="13">
    <location>
        <begin position="65"/>
        <end position="67"/>
    </location>
</feature>
<feature type="helix" evidence="13">
    <location>
        <begin position="73"/>
        <end position="75"/>
    </location>
</feature>
<feature type="helix" evidence="13">
    <location>
        <begin position="80"/>
        <end position="94"/>
    </location>
</feature>
<feature type="strand" evidence="13">
    <location>
        <begin position="103"/>
        <end position="107"/>
    </location>
</feature>
<feature type="helix" evidence="13">
    <location>
        <begin position="108"/>
        <end position="116"/>
    </location>
</feature>
<feature type="helix" evidence="13">
    <location>
        <begin position="117"/>
        <end position="119"/>
    </location>
</feature>
<feature type="strand" evidence="13">
    <location>
        <begin position="125"/>
        <end position="132"/>
    </location>
</feature>
<feature type="strand" evidence="13">
    <location>
        <begin position="135"/>
        <end position="140"/>
    </location>
</feature>
<feature type="helix" evidence="13">
    <location>
        <begin position="142"/>
        <end position="159"/>
    </location>
</feature>
<feature type="helix" evidence="13">
    <location>
        <begin position="162"/>
        <end position="181"/>
    </location>
</feature>
<feature type="strand" evidence="13">
    <location>
        <begin position="183"/>
        <end position="186"/>
    </location>
</feature>
<feature type="helix" evidence="13">
    <location>
        <begin position="188"/>
        <end position="190"/>
    </location>
</feature>
<feature type="helix" evidence="13">
    <location>
        <begin position="193"/>
        <end position="197"/>
    </location>
</feature>
<feature type="strand" evidence="13">
    <location>
        <begin position="199"/>
        <end position="202"/>
    </location>
</feature>
<feature type="strand" evidence="13">
    <location>
        <begin position="205"/>
        <end position="207"/>
    </location>
</feature>
<feature type="strand" evidence="13">
    <location>
        <begin position="209"/>
        <end position="218"/>
    </location>
</feature>
<feature type="strand" evidence="13">
    <location>
        <begin position="221"/>
        <end position="228"/>
    </location>
</feature>
<feature type="strand" evidence="13">
    <location>
        <begin position="231"/>
        <end position="234"/>
    </location>
</feature>
<feature type="helix" evidence="13">
    <location>
        <begin position="243"/>
        <end position="246"/>
    </location>
</feature>
<feature type="strand" evidence="13">
    <location>
        <begin position="247"/>
        <end position="254"/>
    </location>
</feature>
<feature type="helix" evidence="13">
    <location>
        <begin position="259"/>
        <end position="279"/>
    </location>
</feature>
<feature type="strand" evidence="13">
    <location>
        <begin position="283"/>
        <end position="289"/>
    </location>
</feature>
<feature type="strand" evidence="13">
    <location>
        <begin position="294"/>
        <end position="302"/>
    </location>
</feature>
<feature type="helix" evidence="13">
    <location>
        <begin position="303"/>
        <end position="305"/>
    </location>
</feature>
<feature type="helix" evidence="13">
    <location>
        <begin position="306"/>
        <end position="311"/>
    </location>
</feature>
<feature type="helix" evidence="13">
    <location>
        <begin position="326"/>
        <end position="343"/>
    </location>
</feature>
<feature type="strand" evidence="13">
    <location>
        <begin position="352"/>
        <end position="358"/>
    </location>
</feature>
<feature type="turn" evidence="13">
    <location>
        <begin position="359"/>
        <end position="362"/>
    </location>
</feature>
<feature type="strand" evidence="13">
    <location>
        <begin position="363"/>
        <end position="368"/>
    </location>
</feature>
<feature type="helix" evidence="13">
    <location>
        <begin position="371"/>
        <end position="378"/>
    </location>
</feature>
<feature type="turn" evidence="13">
    <location>
        <begin position="379"/>
        <end position="381"/>
    </location>
</feature>
<feature type="helix" evidence="13">
    <location>
        <begin position="385"/>
        <end position="393"/>
    </location>
</feature>
<reference key="1">
    <citation type="journal article" date="2007" name="Nat. Biotechnol.">
        <title>Genome sequence of the lignocellulose-bioconverting and xylose-fermenting yeast Pichia stipitis.</title>
        <authorList>
            <person name="Jeffries T.W."/>
            <person name="Grigoriev I.V."/>
            <person name="Grimwood J."/>
            <person name="Laplaza J.M."/>
            <person name="Aerts A."/>
            <person name="Salamov A."/>
            <person name="Schmutz J."/>
            <person name="Lindquist E."/>
            <person name="Dehal P."/>
            <person name="Shapiro H."/>
            <person name="Jin Y.-S."/>
            <person name="Passoth V."/>
            <person name="Richardson P.M."/>
        </authorList>
    </citation>
    <scope>NUCLEOTIDE SEQUENCE [LARGE SCALE GENOMIC DNA]</scope>
    <source>
        <strain>ATCC 58785 / CBS 6054 / NBRC 10063 / NRRL Y-11545</strain>
    </source>
</reference>
<reference evidence="11" key="2">
    <citation type="journal article" date="2015" name="Nucleic Acids Res.">
        <title>Structural and biochemical studies of the distinct activity profiles of Rai1 enzymes.</title>
        <authorList>
            <person name="Wang V.Y."/>
            <person name="Jiao X."/>
            <person name="Kiledjian M."/>
            <person name="Tong L."/>
        </authorList>
    </citation>
    <scope>X-RAY CRYSTALLOGRAPHY (1.64 ANGSTROMS)</scope>
    <scope>FUNCTION</scope>
</reference>
<reference evidence="12" key="3">
    <citation type="journal article" date="2017" name="Cell">
        <title>5' end nicotinamide adenine dinucleotide cap in human cells promotes RNA decay through DXO-mediated deNADding.</title>
        <authorList>
            <person name="Jiao X."/>
            <person name="Doamekpor S.K."/>
            <person name="Bird J.G."/>
            <person name="Nickels B.E."/>
            <person name="Tong L."/>
            <person name="Hart R.P."/>
            <person name="Kiledjian M."/>
        </authorList>
    </citation>
    <scope>X-RAY CRYSTALLOGRAPHY (1.91 ANGSTROMS) OF 1-394 IN COMPLEX WITH NADP AND CALCIUM</scope>
    <scope>COFACTOR</scope>
</reference>
<sequence>MMKTLSLQSRAKTTALKQPKEIFAFARDIDGEFVYDQKIVKDENVSYYYLPDSKIDGSIDLQAGYAKFKKIPEEKNMSDMKCLLTALTKYEQEHNNGEKVNVDIITYRGLMTKLLALPYNLNDPVDLNVLAYDGQLFINSDEEIELARRKEEDEHKQQSMTPEKYDHMKRCEFSGYKFEAIATLPKPWADCSRQQIDKRGKKMVNNYEQYISVIKTGIGEAKMLLAGEVDCVWDYIPEDGKDVLSHYMELKTTRILESNGQVVNFEKKLFKTWAQCFLMGIRKVVYGFRDDSFFLRDVELYKTEEIPLLIKNNALTENKSGGKINCTTALKWYGAVIEWLLQEIPRDDTSKAYRVSFDPSTRTFTLRELMGNENSRLRNGEMLTSEFKQWRESIQK</sequence>
<evidence type="ECO:0000250" key="1">
    <source>
        <dbReference type="UniProtKB" id="O13836"/>
    </source>
</evidence>
<evidence type="ECO:0000250" key="2">
    <source>
        <dbReference type="UniProtKB" id="O70348"/>
    </source>
</evidence>
<evidence type="ECO:0000250" key="3">
    <source>
        <dbReference type="UniProtKB" id="P53063"/>
    </source>
</evidence>
<evidence type="ECO:0000250" key="4">
    <source>
        <dbReference type="UniProtKB" id="Q06349"/>
    </source>
</evidence>
<evidence type="ECO:0000269" key="5">
    <source>
    </source>
</evidence>
<evidence type="ECO:0000269" key="6">
    <source>
    </source>
</evidence>
<evidence type="ECO:0000303" key="7">
    <source>
    </source>
</evidence>
<evidence type="ECO:0000303" key="8">
    <source>
    </source>
</evidence>
<evidence type="ECO:0000305" key="9"/>
<evidence type="ECO:0000312" key="10">
    <source>
        <dbReference type="EMBL" id="ABN64879.2"/>
    </source>
</evidence>
<evidence type="ECO:0007744" key="11">
    <source>
        <dbReference type="PDB" id="5BTO"/>
    </source>
</evidence>
<evidence type="ECO:0007744" key="12">
    <source>
        <dbReference type="PDB" id="5ULJ"/>
    </source>
</evidence>
<evidence type="ECO:0007829" key="13">
    <source>
        <dbReference type="PDB" id="5BTO"/>
    </source>
</evidence>
<keyword id="KW-0002">3D-structure</keyword>
<keyword id="KW-0378">Hydrolase</keyword>
<keyword id="KW-0479">Metal-binding</keyword>
<keyword id="KW-0507">mRNA processing</keyword>
<keyword id="KW-0540">Nuclease</keyword>
<keyword id="KW-0547">Nucleotide-binding</keyword>
<keyword id="KW-0539">Nucleus</keyword>
<keyword id="KW-1185">Reference proteome</keyword>
<keyword id="KW-0694">RNA-binding</keyword>
<proteinExistence type="evidence at protein level"/>
<name>DXO_PICST</name>
<protein>
    <recommendedName>
        <fullName evidence="9">Decapping nuclease RAI1</fullName>
        <shortName evidence="7 8">SsRai1</shortName>
        <ecNumber evidence="5">3.6.1.-</ecNumber>
    </recommendedName>
    <alternativeName>
        <fullName evidence="9">NAD-capped RNA hydrolase RAI1</fullName>
        <shortName evidence="9">DeNADding enzyme RAI1</shortName>
        <ecNumber evidence="1">3.6.1.-</ecNumber>
    </alternativeName>
</protein>
<accession>A3LNL5</accession>
<gene>
    <name evidence="7" type="primary">RAI1</name>
    <name evidence="10" type="ORF">PICST_55876</name>
</gene>
<dbReference type="EC" id="3.6.1.-" evidence="5 1"/>
<dbReference type="EMBL" id="CP000496">
    <property type="protein sequence ID" value="ABN64879.2"/>
    <property type="molecule type" value="Genomic_DNA"/>
</dbReference>
<dbReference type="RefSeq" id="XP_001382908.2">
    <property type="nucleotide sequence ID" value="XM_001382871.1"/>
</dbReference>
<dbReference type="PDB" id="5BTO">
    <property type="method" value="X-ray"/>
    <property type="resolution" value="1.64 A"/>
    <property type="chains" value="A/B=1-396"/>
</dbReference>
<dbReference type="PDB" id="5ULJ">
    <property type="method" value="X-ray"/>
    <property type="resolution" value="1.91 A"/>
    <property type="chains" value="A/B/C/D=1-394"/>
</dbReference>
<dbReference type="PDBsum" id="5BTO"/>
<dbReference type="PDBsum" id="5ULJ"/>
<dbReference type="SMR" id="A3LNL5"/>
<dbReference type="FunCoup" id="A3LNL5">
    <property type="interactions" value="652"/>
</dbReference>
<dbReference type="STRING" id="322104.A3LNL5"/>
<dbReference type="GeneID" id="4837555"/>
<dbReference type="KEGG" id="pic:PICST_55876"/>
<dbReference type="eggNOG" id="KOG1982">
    <property type="taxonomic scope" value="Eukaryota"/>
</dbReference>
<dbReference type="HOGENOM" id="CLU_024877_4_1_1"/>
<dbReference type="InParanoid" id="A3LNL5"/>
<dbReference type="OMA" id="VVTWRGH"/>
<dbReference type="OrthoDB" id="5853397at2759"/>
<dbReference type="EvolutionaryTrace" id="A3LNL5"/>
<dbReference type="Proteomes" id="UP000002258">
    <property type="component" value="Chromosome 2"/>
</dbReference>
<dbReference type="GO" id="GO:0090730">
    <property type="term" value="C:Las1 complex"/>
    <property type="evidence" value="ECO:0007669"/>
    <property type="project" value="EnsemblFungi"/>
</dbReference>
<dbReference type="GO" id="GO:0110103">
    <property type="term" value="C:RNA polymerase II termination complex"/>
    <property type="evidence" value="ECO:0007669"/>
    <property type="project" value="EnsemblFungi"/>
</dbReference>
<dbReference type="GO" id="GO:0030234">
    <property type="term" value="F:enzyme regulator activity"/>
    <property type="evidence" value="ECO:0007669"/>
    <property type="project" value="EnsemblFungi"/>
</dbReference>
<dbReference type="GO" id="GO:0046872">
    <property type="term" value="F:metal ion binding"/>
    <property type="evidence" value="ECO:0007669"/>
    <property type="project" value="UniProtKB-KW"/>
</dbReference>
<dbReference type="GO" id="GO:0034353">
    <property type="term" value="F:mRNA 5'-diphosphatase activity"/>
    <property type="evidence" value="ECO:0007669"/>
    <property type="project" value="EnsemblFungi"/>
</dbReference>
<dbReference type="GO" id="GO:0000166">
    <property type="term" value="F:nucleotide binding"/>
    <property type="evidence" value="ECO:0007669"/>
    <property type="project" value="UniProtKB-KW"/>
</dbReference>
<dbReference type="GO" id="GO:1990174">
    <property type="term" value="F:phosphodiesterase decapping endonuclease activity"/>
    <property type="evidence" value="ECO:0007669"/>
    <property type="project" value="EnsemblFungi"/>
</dbReference>
<dbReference type="GO" id="GO:0003723">
    <property type="term" value="F:RNA binding"/>
    <property type="evidence" value="ECO:0007669"/>
    <property type="project" value="UniProtKB-KW"/>
</dbReference>
<dbReference type="GO" id="GO:0000448">
    <property type="term" value="P:cleavage in ITS2 between 5.8S rRNA and LSU-rRNA of tricistronic rRNA transcript (SSU-rRNA, 5.8S rRNA, LSU-rRNA)"/>
    <property type="evidence" value="ECO:0007669"/>
    <property type="project" value="EnsemblFungi"/>
</dbReference>
<dbReference type="GO" id="GO:0031087">
    <property type="term" value="P:deadenylation-independent decapping of nuclear-transcribed mRNA"/>
    <property type="evidence" value="ECO:0007669"/>
    <property type="project" value="EnsemblFungi"/>
</dbReference>
<dbReference type="GO" id="GO:0006397">
    <property type="term" value="P:mRNA processing"/>
    <property type="evidence" value="ECO:0007669"/>
    <property type="project" value="UniProtKB-KW"/>
</dbReference>
<dbReference type="GO" id="GO:0110155">
    <property type="term" value="P:NAD-cap decapping"/>
    <property type="evidence" value="ECO:0007669"/>
    <property type="project" value="EnsemblFungi"/>
</dbReference>
<dbReference type="GO" id="GO:0071035">
    <property type="term" value="P:nuclear polyadenylation-dependent rRNA catabolic process"/>
    <property type="evidence" value="ECO:0007669"/>
    <property type="project" value="EnsemblFungi"/>
</dbReference>
<dbReference type="GO" id="GO:1904595">
    <property type="term" value="P:positive regulation of termination of RNA polymerase II transcription"/>
    <property type="evidence" value="ECO:0007669"/>
    <property type="project" value="EnsemblFungi"/>
</dbReference>
<dbReference type="GO" id="GO:0030846">
    <property type="term" value="P:termination of RNA polymerase II transcription, poly(A)-coupled"/>
    <property type="evidence" value="ECO:0007669"/>
    <property type="project" value="EnsemblFungi"/>
</dbReference>
<dbReference type="InterPro" id="IPR013961">
    <property type="entry name" value="RAI1"/>
</dbReference>
<dbReference type="InterPro" id="IPR039039">
    <property type="entry name" value="RAI1-like_fam"/>
</dbReference>
<dbReference type="PANTHER" id="PTHR12395:SF9">
    <property type="entry name" value="DECAPPING AND EXORIBONUCLEASE PROTEIN"/>
    <property type="match status" value="1"/>
</dbReference>
<dbReference type="PANTHER" id="PTHR12395">
    <property type="entry name" value="DOM-3 RELATED"/>
    <property type="match status" value="1"/>
</dbReference>
<dbReference type="Pfam" id="PF08652">
    <property type="entry name" value="RAI1"/>
    <property type="match status" value="1"/>
</dbReference>
<organism>
    <name type="scientific">Scheffersomyces stipitis (strain ATCC 58785 / CBS 6054 / NBRC 10063 / NRRL Y-11545)</name>
    <name type="common">Yeast</name>
    <name type="synonym">Pichia stipitis</name>
    <dbReference type="NCBI Taxonomy" id="322104"/>
    <lineage>
        <taxon>Eukaryota</taxon>
        <taxon>Fungi</taxon>
        <taxon>Dikarya</taxon>
        <taxon>Ascomycota</taxon>
        <taxon>Saccharomycotina</taxon>
        <taxon>Pichiomycetes</taxon>
        <taxon>Debaryomycetaceae</taxon>
        <taxon>Scheffersomyces</taxon>
    </lineage>
</organism>
<comment type="function">
    <text evidence="1 2 4 5">Decapping enzyme for NAD-capped RNAs: specifically hydrolyzes the nicotinamide adenine dinucleotide (NAD) cap from a subset of RNAs by removing the entire NAD moiety from the 5'-end of an NAD-capped RNA (By similarity). The NAD-cap is present at the 5'-end of some RNAs and snoRNAs. In contrast to the canonical 5'-end N7 methylguanosine (m7G) cap, the NAD cap promotes mRNA decay (By similarity). Also acts as a non-canonical decapping enzyme that removes the entire cap structure of m7G capped or incompletely capped RNAs (PubMed:26101253). Has decapping activity toward incomplete 5'-end m7G cap mRNAs such as unmethylated 5'-end-capped RNA (cap0), while it has no activity toward 2'-O-ribose methylated m7G cap (cap1) (By similarity). Also possesses RNA 5'-pyrophosphohydrolase activity by hydrolyzing the 5'-end triphosphate to release pyrophosphates (By similarity). Stimulates exoribonuclease activity of Rat1, allowing it to degrade RNAs with stable secondary structure more effectively (By similarity).</text>
</comment>
<comment type="catalytic activity">
    <reaction evidence="1">
        <text>a 5'-end NAD(+)-phospho-ribonucleoside in mRNA + H2O = a 5'-end phospho-ribonucleoside in mRNA + NAD(+) + H(+)</text>
        <dbReference type="Rhea" id="RHEA:60880"/>
        <dbReference type="Rhea" id="RHEA-COMP:15692"/>
        <dbReference type="Rhea" id="RHEA-COMP:15698"/>
        <dbReference type="ChEBI" id="CHEBI:15377"/>
        <dbReference type="ChEBI" id="CHEBI:15378"/>
        <dbReference type="ChEBI" id="CHEBI:57540"/>
        <dbReference type="ChEBI" id="CHEBI:138282"/>
        <dbReference type="ChEBI" id="CHEBI:144029"/>
    </reaction>
    <physiologicalReaction direction="left-to-right" evidence="1">
        <dbReference type="Rhea" id="RHEA:60881"/>
    </physiologicalReaction>
</comment>
<comment type="catalytic activity">
    <reaction evidence="3">
        <text>a 5'-end (N(7)-methyl 5'-triphosphoguanosine)-ribonucleoside-ribonucleotide in mRNA + H2O = a (N(7)-methyl 5'-triphosphoguanosine)-nucleoside + a 5'-end phospho-ribonucleoside in mRNA + H(+)</text>
        <dbReference type="Rhea" id="RHEA:66928"/>
        <dbReference type="Rhea" id="RHEA-COMP:15692"/>
        <dbReference type="Rhea" id="RHEA-COMP:17313"/>
        <dbReference type="ChEBI" id="CHEBI:15377"/>
        <dbReference type="ChEBI" id="CHEBI:15378"/>
        <dbReference type="ChEBI" id="CHEBI:138282"/>
        <dbReference type="ChEBI" id="CHEBI:172876"/>
        <dbReference type="ChEBI" id="CHEBI:172877"/>
    </reaction>
    <physiologicalReaction direction="left-to-right" evidence="3">
        <dbReference type="Rhea" id="RHEA:66929"/>
    </physiologicalReaction>
</comment>
<comment type="catalytic activity">
    <reaction evidence="1">
        <text>a 5'-end triphospho-ribonucleoside in mRNA + H2O = a 5'-end phospho-ribonucleoside in mRNA + diphosphate + H(+)</text>
        <dbReference type="Rhea" id="RHEA:78683"/>
        <dbReference type="Rhea" id="RHEA-COMP:15692"/>
        <dbReference type="Rhea" id="RHEA-COMP:17164"/>
        <dbReference type="ChEBI" id="CHEBI:15377"/>
        <dbReference type="ChEBI" id="CHEBI:15378"/>
        <dbReference type="ChEBI" id="CHEBI:33019"/>
        <dbReference type="ChEBI" id="CHEBI:138282"/>
        <dbReference type="ChEBI" id="CHEBI:167618"/>
    </reaction>
    <physiologicalReaction direction="left-to-right" evidence="1">
        <dbReference type="Rhea" id="RHEA:78684"/>
    </physiologicalReaction>
</comment>
<comment type="cofactor">
    <cofactor evidence="6">
        <name>a divalent metal cation</name>
        <dbReference type="ChEBI" id="CHEBI:60240"/>
    </cofactor>
    <text evidence="6">Divalent metal cation.</text>
</comment>
<comment type="subunit">
    <text evidence="1">Interacts with RAT1; the interaction is direct, stabilizes RAT1 protein structure and stimulates its exoribonuclease activity (By similarity). The interaction also stimulates RAI1 pyrophosphohydrolase activity, probably by recruiting it to mRNA substrates (By similarity).</text>
</comment>
<comment type="subcellular location">
    <subcellularLocation>
        <location evidence="3">Nucleus</location>
    </subcellularLocation>
</comment>
<comment type="similarity">
    <text evidence="9">Belongs to the DXO/Dom3Z family.</text>
</comment>